<keyword id="KW-0963">Cytoplasm</keyword>
<keyword id="KW-0274">FAD</keyword>
<keyword id="KW-0285">Flavoprotein</keyword>
<keyword id="KW-0489">Methyltransferase</keyword>
<keyword id="KW-0520">NAD</keyword>
<keyword id="KW-0521">NADP</keyword>
<keyword id="KW-1185">Reference proteome</keyword>
<keyword id="KW-0808">Transferase</keyword>
<keyword id="KW-0819">tRNA processing</keyword>
<evidence type="ECO:0000255" key="1">
    <source>
        <dbReference type="HAMAP-Rule" id="MF_01037"/>
    </source>
</evidence>
<sequence>MTTQVVNVIGAGLAGSEAAYQIAKRGVQVRLYEMRPVRQTPAHHTDKFAELVCSNSLRANTLTNAVGVIKEEMRLMDSVIIRAADECSVPAGGALAVDRHEFAAKVTEYVKNHPNVTVMNEEITEIPEGPTIIATGPLTSPDLSAQLKELTGEDYFYFYDAAAPIVEKDSIDMNKVYLKSRYDKGEAAYLNCPMTEEEFDRFYEALIAAETVPLKEFEKEIFFEGCMPVEVMASRGRQTLVFGPMKPVGLEDPKTGKTPYAVVQLRQDDAAGTLYNIVGFQTHLKWGPQKEVLQLIPGLENAEIVRYGVMHRNTFINSPNLLRPTYQYKQRDDLFFAGQMTGVEGYVESAASGLLAGINAARLVKGEEPVVLPPVTAMGSMANYITATNAKNFQPMNANFGLFAPLEKKIKKKAERNEAYATRALEMIRNFVNI</sequence>
<protein>
    <recommendedName>
        <fullName evidence="1">Methylenetetrahydrofolate--tRNA-(uracil-5-)-methyltransferase TrmFO</fullName>
        <ecNumber evidence="1">2.1.1.74</ecNumber>
    </recommendedName>
    <alternativeName>
        <fullName evidence="1">Folate-dependent tRNA (uracil-5-)-methyltransferase</fullName>
    </alternativeName>
    <alternativeName>
        <fullName evidence="1">Folate-dependent tRNA(M-5-U54)-methyltransferase</fullName>
    </alternativeName>
</protein>
<gene>
    <name evidence="1" type="primary">trmFO</name>
    <name type="synonym">gid</name>
    <name type="ordered locus">BA_3970</name>
    <name type="ordered locus">GBAA_3970</name>
    <name type="ordered locus">BAS3683</name>
</gene>
<name>TRMFO_BACAN</name>
<dbReference type="EC" id="2.1.1.74" evidence="1"/>
<dbReference type="EMBL" id="AE016879">
    <property type="protein sequence ID" value="AAP27699.1"/>
    <property type="molecule type" value="Genomic_DNA"/>
</dbReference>
<dbReference type="EMBL" id="AE017334">
    <property type="protein sequence ID" value="AAT33084.1"/>
    <property type="molecule type" value="Genomic_DNA"/>
</dbReference>
<dbReference type="EMBL" id="AE017225">
    <property type="protein sequence ID" value="AAT55985.1"/>
    <property type="molecule type" value="Genomic_DNA"/>
</dbReference>
<dbReference type="RefSeq" id="NP_846213.1">
    <property type="nucleotide sequence ID" value="NC_003997.3"/>
</dbReference>
<dbReference type="RefSeq" id="WP_003161605.1">
    <property type="nucleotide sequence ID" value="NZ_WXXJ01000026.1"/>
</dbReference>
<dbReference type="RefSeq" id="YP_029934.1">
    <property type="nucleotide sequence ID" value="NC_005945.1"/>
</dbReference>
<dbReference type="SMR" id="Q81WK3"/>
<dbReference type="IntAct" id="Q81WK3">
    <property type="interactions" value="6"/>
</dbReference>
<dbReference type="STRING" id="261594.GBAA_3970"/>
<dbReference type="DNASU" id="1086598"/>
<dbReference type="GeneID" id="45023660"/>
<dbReference type="KEGG" id="ban:BA_3970"/>
<dbReference type="KEGG" id="bar:GBAA_3970"/>
<dbReference type="KEGG" id="bat:BAS3683"/>
<dbReference type="PATRIC" id="fig|198094.11.peg.3940"/>
<dbReference type="eggNOG" id="COG1206">
    <property type="taxonomic scope" value="Bacteria"/>
</dbReference>
<dbReference type="HOGENOM" id="CLU_033057_1_0_9"/>
<dbReference type="OMA" id="MHRNTFL"/>
<dbReference type="OrthoDB" id="9803114at2"/>
<dbReference type="Proteomes" id="UP000000427">
    <property type="component" value="Chromosome"/>
</dbReference>
<dbReference type="Proteomes" id="UP000000594">
    <property type="component" value="Chromosome"/>
</dbReference>
<dbReference type="GO" id="GO:0005829">
    <property type="term" value="C:cytosol"/>
    <property type="evidence" value="ECO:0007669"/>
    <property type="project" value="TreeGrafter"/>
</dbReference>
<dbReference type="GO" id="GO:0050660">
    <property type="term" value="F:flavin adenine dinucleotide binding"/>
    <property type="evidence" value="ECO:0007669"/>
    <property type="project" value="UniProtKB-UniRule"/>
</dbReference>
<dbReference type="GO" id="GO:0047151">
    <property type="term" value="F:tRNA (uracil(54)-C5)-methyltransferase activity, 5,10-methylenetetrahydrofolate-dependent"/>
    <property type="evidence" value="ECO:0007669"/>
    <property type="project" value="UniProtKB-UniRule"/>
</dbReference>
<dbReference type="GO" id="GO:0030488">
    <property type="term" value="P:tRNA methylation"/>
    <property type="evidence" value="ECO:0007669"/>
    <property type="project" value="TreeGrafter"/>
</dbReference>
<dbReference type="GO" id="GO:0002098">
    <property type="term" value="P:tRNA wobble uridine modification"/>
    <property type="evidence" value="ECO:0007669"/>
    <property type="project" value="TreeGrafter"/>
</dbReference>
<dbReference type="FunFam" id="3.50.50.60:FF:000035">
    <property type="entry name" value="Methylenetetrahydrofolate--tRNA-(uracil-5-)-methyltransferase TrmFO"/>
    <property type="match status" value="1"/>
</dbReference>
<dbReference type="FunFam" id="3.50.50.60:FF:000040">
    <property type="entry name" value="Methylenetetrahydrofolate--tRNA-(uracil-5-)-methyltransferase TrmFO"/>
    <property type="match status" value="1"/>
</dbReference>
<dbReference type="Gene3D" id="3.50.50.60">
    <property type="entry name" value="FAD/NAD(P)-binding domain"/>
    <property type="match status" value="2"/>
</dbReference>
<dbReference type="HAMAP" id="MF_01037">
    <property type="entry name" value="TrmFO"/>
    <property type="match status" value="1"/>
</dbReference>
<dbReference type="InterPro" id="IPR036188">
    <property type="entry name" value="FAD/NAD-bd_sf"/>
</dbReference>
<dbReference type="InterPro" id="IPR002218">
    <property type="entry name" value="MnmG-rel"/>
</dbReference>
<dbReference type="InterPro" id="IPR020595">
    <property type="entry name" value="MnmG-rel_CS"/>
</dbReference>
<dbReference type="InterPro" id="IPR040131">
    <property type="entry name" value="MnmG_N"/>
</dbReference>
<dbReference type="InterPro" id="IPR004417">
    <property type="entry name" value="TrmFO"/>
</dbReference>
<dbReference type="NCBIfam" id="TIGR00137">
    <property type="entry name" value="gid_trmFO"/>
    <property type="match status" value="1"/>
</dbReference>
<dbReference type="NCBIfam" id="NF003739">
    <property type="entry name" value="PRK05335.1"/>
    <property type="match status" value="1"/>
</dbReference>
<dbReference type="PANTHER" id="PTHR11806">
    <property type="entry name" value="GLUCOSE INHIBITED DIVISION PROTEIN A"/>
    <property type="match status" value="1"/>
</dbReference>
<dbReference type="PANTHER" id="PTHR11806:SF2">
    <property type="entry name" value="METHYLENETETRAHYDROFOLATE--TRNA-(URACIL-5-)-METHYLTRANSFERASE TRMFO"/>
    <property type="match status" value="1"/>
</dbReference>
<dbReference type="Pfam" id="PF01134">
    <property type="entry name" value="GIDA"/>
    <property type="match status" value="1"/>
</dbReference>
<dbReference type="SUPFAM" id="SSF51905">
    <property type="entry name" value="FAD/NAD(P)-binding domain"/>
    <property type="match status" value="1"/>
</dbReference>
<dbReference type="PROSITE" id="PS01281">
    <property type="entry name" value="GIDA_2"/>
    <property type="match status" value="1"/>
</dbReference>
<organism>
    <name type="scientific">Bacillus anthracis</name>
    <dbReference type="NCBI Taxonomy" id="1392"/>
    <lineage>
        <taxon>Bacteria</taxon>
        <taxon>Bacillati</taxon>
        <taxon>Bacillota</taxon>
        <taxon>Bacilli</taxon>
        <taxon>Bacillales</taxon>
        <taxon>Bacillaceae</taxon>
        <taxon>Bacillus</taxon>
        <taxon>Bacillus cereus group</taxon>
    </lineage>
</organism>
<reference key="1">
    <citation type="journal article" date="2003" name="Nature">
        <title>The genome sequence of Bacillus anthracis Ames and comparison to closely related bacteria.</title>
        <authorList>
            <person name="Read T.D."/>
            <person name="Peterson S.N."/>
            <person name="Tourasse N.J."/>
            <person name="Baillie L.W."/>
            <person name="Paulsen I.T."/>
            <person name="Nelson K.E."/>
            <person name="Tettelin H."/>
            <person name="Fouts D.E."/>
            <person name="Eisen J.A."/>
            <person name="Gill S.R."/>
            <person name="Holtzapple E.K."/>
            <person name="Okstad O.A."/>
            <person name="Helgason E."/>
            <person name="Rilstone J."/>
            <person name="Wu M."/>
            <person name="Kolonay J.F."/>
            <person name="Beanan M.J."/>
            <person name="Dodson R.J."/>
            <person name="Brinkac L.M."/>
            <person name="Gwinn M.L."/>
            <person name="DeBoy R.T."/>
            <person name="Madpu R."/>
            <person name="Daugherty S.C."/>
            <person name="Durkin A.S."/>
            <person name="Haft D.H."/>
            <person name="Nelson W.C."/>
            <person name="Peterson J.D."/>
            <person name="Pop M."/>
            <person name="Khouri H.M."/>
            <person name="Radune D."/>
            <person name="Benton J.L."/>
            <person name="Mahamoud Y."/>
            <person name="Jiang L."/>
            <person name="Hance I.R."/>
            <person name="Weidman J.F."/>
            <person name="Berry K.J."/>
            <person name="Plaut R.D."/>
            <person name="Wolf A.M."/>
            <person name="Watkins K.L."/>
            <person name="Nierman W.C."/>
            <person name="Hazen A."/>
            <person name="Cline R.T."/>
            <person name="Redmond C."/>
            <person name="Thwaite J.E."/>
            <person name="White O."/>
            <person name="Salzberg S.L."/>
            <person name="Thomason B."/>
            <person name="Friedlander A.M."/>
            <person name="Koehler T.M."/>
            <person name="Hanna P.C."/>
            <person name="Kolstoe A.-B."/>
            <person name="Fraser C.M."/>
        </authorList>
    </citation>
    <scope>NUCLEOTIDE SEQUENCE [LARGE SCALE GENOMIC DNA]</scope>
    <source>
        <strain>Ames / isolate Porton</strain>
    </source>
</reference>
<reference key="2">
    <citation type="journal article" date="2009" name="J. Bacteriol.">
        <title>The complete genome sequence of Bacillus anthracis Ames 'Ancestor'.</title>
        <authorList>
            <person name="Ravel J."/>
            <person name="Jiang L."/>
            <person name="Stanley S.T."/>
            <person name="Wilson M.R."/>
            <person name="Decker R.S."/>
            <person name="Read T.D."/>
            <person name="Worsham P."/>
            <person name="Keim P.S."/>
            <person name="Salzberg S.L."/>
            <person name="Fraser-Liggett C.M."/>
            <person name="Rasko D.A."/>
        </authorList>
    </citation>
    <scope>NUCLEOTIDE SEQUENCE [LARGE SCALE GENOMIC DNA]</scope>
    <source>
        <strain>Ames ancestor</strain>
    </source>
</reference>
<reference key="3">
    <citation type="submission" date="2004-01" db="EMBL/GenBank/DDBJ databases">
        <title>Complete genome sequence of Bacillus anthracis Sterne.</title>
        <authorList>
            <person name="Brettin T.S."/>
            <person name="Bruce D."/>
            <person name="Challacombe J.F."/>
            <person name="Gilna P."/>
            <person name="Han C."/>
            <person name="Hill K."/>
            <person name="Hitchcock P."/>
            <person name="Jackson P."/>
            <person name="Keim P."/>
            <person name="Longmire J."/>
            <person name="Lucas S."/>
            <person name="Okinaka R."/>
            <person name="Richardson P."/>
            <person name="Rubin E."/>
            <person name="Tice H."/>
        </authorList>
    </citation>
    <scope>NUCLEOTIDE SEQUENCE [LARGE SCALE GENOMIC DNA]</scope>
    <source>
        <strain>Sterne</strain>
    </source>
</reference>
<accession>Q81WK3</accession>
<accession>Q6HUQ4</accession>
<accession>Q6KNY5</accession>
<proteinExistence type="inferred from homology"/>
<feature type="chain" id="PRO_0000117228" description="Methylenetetrahydrofolate--tRNA-(uracil-5-)-methyltransferase TrmFO">
    <location>
        <begin position="1"/>
        <end position="434"/>
    </location>
</feature>
<feature type="binding site" evidence="1">
    <location>
        <begin position="10"/>
        <end position="15"/>
    </location>
    <ligand>
        <name>FAD</name>
        <dbReference type="ChEBI" id="CHEBI:57692"/>
    </ligand>
</feature>
<comment type="function">
    <text evidence="1">Catalyzes the folate-dependent formation of 5-methyl-uridine at position 54 (M-5-U54) in all tRNAs.</text>
</comment>
<comment type="catalytic activity">
    <reaction evidence="1">
        <text>uridine(54) in tRNA + (6R)-5,10-methylene-5,6,7,8-tetrahydrofolate + NADH + H(+) = 5-methyluridine(54) in tRNA + (6S)-5,6,7,8-tetrahydrofolate + NAD(+)</text>
        <dbReference type="Rhea" id="RHEA:16873"/>
        <dbReference type="Rhea" id="RHEA-COMP:10167"/>
        <dbReference type="Rhea" id="RHEA-COMP:10193"/>
        <dbReference type="ChEBI" id="CHEBI:15378"/>
        <dbReference type="ChEBI" id="CHEBI:15636"/>
        <dbReference type="ChEBI" id="CHEBI:57453"/>
        <dbReference type="ChEBI" id="CHEBI:57540"/>
        <dbReference type="ChEBI" id="CHEBI:57945"/>
        <dbReference type="ChEBI" id="CHEBI:65315"/>
        <dbReference type="ChEBI" id="CHEBI:74447"/>
        <dbReference type="EC" id="2.1.1.74"/>
    </reaction>
</comment>
<comment type="catalytic activity">
    <reaction evidence="1">
        <text>uridine(54) in tRNA + (6R)-5,10-methylene-5,6,7,8-tetrahydrofolate + NADPH + H(+) = 5-methyluridine(54) in tRNA + (6S)-5,6,7,8-tetrahydrofolate + NADP(+)</text>
        <dbReference type="Rhea" id="RHEA:62372"/>
        <dbReference type="Rhea" id="RHEA-COMP:10167"/>
        <dbReference type="Rhea" id="RHEA-COMP:10193"/>
        <dbReference type="ChEBI" id="CHEBI:15378"/>
        <dbReference type="ChEBI" id="CHEBI:15636"/>
        <dbReference type="ChEBI" id="CHEBI:57453"/>
        <dbReference type="ChEBI" id="CHEBI:57783"/>
        <dbReference type="ChEBI" id="CHEBI:58349"/>
        <dbReference type="ChEBI" id="CHEBI:65315"/>
        <dbReference type="ChEBI" id="CHEBI:74447"/>
        <dbReference type="EC" id="2.1.1.74"/>
    </reaction>
</comment>
<comment type="cofactor">
    <cofactor evidence="1">
        <name>FAD</name>
        <dbReference type="ChEBI" id="CHEBI:57692"/>
    </cofactor>
</comment>
<comment type="subcellular location">
    <subcellularLocation>
        <location evidence="1">Cytoplasm</location>
    </subcellularLocation>
</comment>
<comment type="similarity">
    <text evidence="1">Belongs to the MnmG family. TrmFO subfamily.</text>
</comment>